<sequence>MPLNVSFANRNYDLDYDSVQPYFYCDEEENFYQQQQQSELQPPAPSEDIWKKFELLPTPPLSPSRRSGLCSPSYVAFASFSPRGDDDGGGGSFSTADQLEMVTELLGGDMVNQSFICDPDDETFIKNIIIQDCMWSGFSAAAKLVSEKLASYQAARKDSGSPSPARGPGGCPTSSLYLQDLTAAASECIDPSVVFPYPLNDSSSPKPCASPDSAAFSPSSDSLLSSAESSPRASPKPLGLHEETPPTTSSDSEEEQEEEEEIDVVSVEKRQPPAKRSESGSPSAGGHSKPPHSPLVLKRCHVPTHQHNYAAPPSTRKDYPAAKRAKLDSGRVLKQISNNRKCISPRSSDTEENDKRRTDNVLERQRRNELKRSFFALRDQIPELENNEKAPKVVILKKATAYILSVQAGEQKLISEKDLLRKRREQLKHKLEQLRNS</sequence>
<organism>
    <name type="scientific">Feline leukemia virus FTT</name>
    <dbReference type="NCBI Taxonomy" id="11923"/>
    <lineage>
        <taxon>Viruses</taxon>
        <taxon>Riboviria</taxon>
        <taxon>Pararnavirae</taxon>
        <taxon>Artverviricota</taxon>
        <taxon>Revtraviricetes</taxon>
        <taxon>Ortervirales</taxon>
        <taxon>Retroviridae</taxon>
        <taxon>Orthoretrovirinae</taxon>
        <taxon>Gammaretrovirus</taxon>
        <taxon>Feline leukemia virus</taxon>
    </lineage>
</organism>
<reference key="1">
    <citation type="journal article" date="1985" name="J. Virol.">
        <title>Nucleotide sequence of a transduced myc gene from a defective feline leukemia provirus.</title>
        <authorList>
            <person name="Braun M.J."/>
            <person name="Deininger P.L."/>
            <person name="Casey J.W."/>
        </authorList>
    </citation>
    <scope>NUCLEOTIDE SEQUENCE [GENOMIC DNA]</scope>
</reference>
<reference key="2">
    <citation type="journal article" date="1989" name="J. Virol.">
        <title>Structure, origin, and transforming activity of feline leukemia virus-myc recombinant provirus FTT.</title>
        <authorList>
            <person name="Doggett D.L."/>
            <person name="Drake A.L."/>
            <person name="Hirsch V."/>
            <person name="Rowe M.E."/>
            <person name="Stallard V."/>
            <person name="Mullins J.I."/>
        </authorList>
    </citation>
    <scope>NUCLEOTIDE SEQUENCE [GENOMIC DNA]</scope>
</reference>
<keyword id="KW-0010">Activator</keyword>
<keyword id="KW-0238">DNA-binding</keyword>
<keyword id="KW-1048">Host nucleus</keyword>
<keyword id="KW-0553">Oncogene</keyword>
<keyword id="KW-0804">Transcription</keyword>
<keyword id="KW-0805">Transcription regulation</keyword>
<organismHost>
    <name type="scientific">Felidae</name>
    <name type="common">cat family</name>
    <dbReference type="NCBI Taxonomy" id="9681"/>
</organismHost>
<comment type="function">
    <text evidence="1">Participates in the regulation of gene transcription. Binds DNA in a non-specific manner, yet also specifically recognizes the core sequence CAC[GA]TG. Seems to activate the transcription of growth-related genes (By similarity).</text>
</comment>
<comment type="subcellular location">
    <subcellularLocation>
        <location evidence="4">Host nucleus</location>
    </subcellularLocation>
</comment>
<comment type="miscellaneous">
    <text>This protein is synthesized as a Gag-vMyc chimeric protein. The sequence shown here corresponds to the Myc homolog fragment of the chimera.</text>
</comment>
<name>MYC_FLVTT</name>
<gene>
    <name type="primary">MYC</name>
</gene>
<protein>
    <recommendedName>
        <fullName>Viral myc transforming protein</fullName>
        <shortName>v-Myc</shortName>
    </recommendedName>
</protein>
<dbReference type="EMBL" id="M10973">
    <property type="protein sequence ID" value="AAA43059.1"/>
    <property type="status" value="ALT_SEQ"/>
    <property type="molecule type" value="Genomic_DNA"/>
</dbReference>
<dbReference type="EMBL" id="M25762">
    <property type="protein sequence ID" value="AAA30812.1"/>
    <property type="molecule type" value="Genomic_DNA"/>
</dbReference>
<dbReference type="PIR" id="A26268">
    <property type="entry name" value="TVMVFT"/>
</dbReference>
<dbReference type="SMR" id="P21438"/>
<dbReference type="GO" id="GO:0042025">
    <property type="term" value="C:host cell nucleus"/>
    <property type="evidence" value="ECO:0007669"/>
    <property type="project" value="UniProtKB-SubCell"/>
</dbReference>
<dbReference type="GO" id="GO:0000981">
    <property type="term" value="F:DNA-binding transcription factor activity, RNA polymerase II-specific"/>
    <property type="evidence" value="ECO:0000250"/>
    <property type="project" value="UniProtKB"/>
</dbReference>
<dbReference type="GO" id="GO:0070888">
    <property type="term" value="F:E-box binding"/>
    <property type="evidence" value="ECO:0000250"/>
    <property type="project" value="UniProtKB"/>
</dbReference>
<dbReference type="GO" id="GO:0046983">
    <property type="term" value="F:protein dimerization activity"/>
    <property type="evidence" value="ECO:0007669"/>
    <property type="project" value="InterPro"/>
</dbReference>
<dbReference type="GO" id="GO:0044877">
    <property type="term" value="F:protein-containing complex binding"/>
    <property type="evidence" value="ECO:0000250"/>
    <property type="project" value="UniProtKB"/>
</dbReference>
<dbReference type="GO" id="GO:0006338">
    <property type="term" value="P:chromatin remodeling"/>
    <property type="evidence" value="ECO:0000250"/>
    <property type="project" value="UniProtKB"/>
</dbReference>
<dbReference type="GO" id="GO:0051276">
    <property type="term" value="P:chromosome organization"/>
    <property type="evidence" value="ECO:0000250"/>
    <property type="project" value="UniProtKB"/>
</dbReference>
<dbReference type="GO" id="GO:0006974">
    <property type="term" value="P:DNA damage response"/>
    <property type="evidence" value="ECO:0000250"/>
    <property type="project" value="UniProtKB"/>
</dbReference>
<dbReference type="GO" id="GO:0051782">
    <property type="term" value="P:negative regulation of cell division"/>
    <property type="evidence" value="ECO:0000250"/>
    <property type="project" value="UniProtKB"/>
</dbReference>
<dbReference type="GO" id="GO:0045656">
    <property type="term" value="P:negative regulation of monocyte differentiation"/>
    <property type="evidence" value="ECO:0000250"/>
    <property type="project" value="UniProtKB"/>
</dbReference>
<dbReference type="GO" id="GO:0050679">
    <property type="term" value="P:positive regulation of epithelial cell proliferation"/>
    <property type="evidence" value="ECO:0000250"/>
    <property type="project" value="UniProtKB"/>
</dbReference>
<dbReference type="GO" id="GO:0048146">
    <property type="term" value="P:positive regulation of fibroblast proliferation"/>
    <property type="evidence" value="ECO:0000250"/>
    <property type="project" value="UniProtKB"/>
</dbReference>
<dbReference type="GO" id="GO:0045944">
    <property type="term" value="P:positive regulation of transcription by RNA polymerase II"/>
    <property type="evidence" value="ECO:0000250"/>
    <property type="project" value="UniProtKB"/>
</dbReference>
<dbReference type="GO" id="GO:0032204">
    <property type="term" value="P:regulation of telomere maintenance"/>
    <property type="evidence" value="ECO:0000250"/>
    <property type="project" value="UniProtKB"/>
</dbReference>
<dbReference type="CDD" id="cd11458">
    <property type="entry name" value="bHLHzip_c-Myc"/>
    <property type="match status" value="1"/>
</dbReference>
<dbReference type="FunFam" id="4.10.280.10:FF:000019">
    <property type="entry name" value="Myc proto-oncogene protein"/>
    <property type="match status" value="1"/>
</dbReference>
<dbReference type="Gene3D" id="4.10.280.10">
    <property type="entry name" value="Helix-loop-helix DNA-binding domain"/>
    <property type="match status" value="1"/>
</dbReference>
<dbReference type="InterPro" id="IPR011598">
    <property type="entry name" value="bHLH_dom"/>
</dbReference>
<dbReference type="InterPro" id="IPR036638">
    <property type="entry name" value="HLH_DNA-bd_sf"/>
</dbReference>
<dbReference type="InterPro" id="IPR003327">
    <property type="entry name" value="Myc-LZ"/>
</dbReference>
<dbReference type="InterPro" id="IPR050433">
    <property type="entry name" value="Myc_transcription_factors"/>
</dbReference>
<dbReference type="InterPro" id="IPR002418">
    <property type="entry name" value="Tscrpt_reg_Myc"/>
</dbReference>
<dbReference type="InterPro" id="IPR012682">
    <property type="entry name" value="Tscrpt_reg_Myc_N"/>
</dbReference>
<dbReference type="PANTHER" id="PTHR45851">
    <property type="entry name" value="MYC PROTO-ONCOGENE"/>
    <property type="match status" value="1"/>
</dbReference>
<dbReference type="Pfam" id="PF00010">
    <property type="entry name" value="HLH"/>
    <property type="match status" value="1"/>
</dbReference>
<dbReference type="Pfam" id="PF02344">
    <property type="entry name" value="Myc-LZ"/>
    <property type="match status" value="1"/>
</dbReference>
<dbReference type="Pfam" id="PF01056">
    <property type="entry name" value="Myc_N"/>
    <property type="match status" value="1"/>
</dbReference>
<dbReference type="PIRSF" id="PIRSF001705">
    <property type="entry name" value="Myc_protein"/>
    <property type="match status" value="1"/>
</dbReference>
<dbReference type="PRINTS" id="PR00044">
    <property type="entry name" value="LEUZIPPRMYC"/>
</dbReference>
<dbReference type="SMART" id="SM00353">
    <property type="entry name" value="HLH"/>
    <property type="match status" value="1"/>
</dbReference>
<dbReference type="SUPFAM" id="SSF47459">
    <property type="entry name" value="HLH, helix-loop-helix DNA-binding domain"/>
    <property type="match status" value="1"/>
</dbReference>
<dbReference type="PROSITE" id="PS50888">
    <property type="entry name" value="BHLH"/>
    <property type="match status" value="1"/>
</dbReference>
<accession>P21438</accession>
<proteinExistence type="inferred from homology"/>
<feature type="chain" id="PRO_0000127312" description="Viral myc transforming protein">
    <location>
        <begin position="1"/>
        <end position="437"/>
    </location>
</feature>
<feature type="domain" description="bHLH" evidence="2">
    <location>
        <begin position="354"/>
        <end position="406"/>
    </location>
</feature>
<feature type="region of interest" description="Disordered" evidence="3">
    <location>
        <begin position="201"/>
        <end position="358"/>
    </location>
</feature>
<feature type="region of interest" description="Leucine-zipper">
    <location>
        <begin position="413"/>
        <end position="434"/>
    </location>
</feature>
<feature type="compositionally biased region" description="Low complexity" evidence="3">
    <location>
        <begin position="207"/>
        <end position="235"/>
    </location>
</feature>
<feature type="compositionally biased region" description="Acidic residues" evidence="3">
    <location>
        <begin position="251"/>
        <end position="263"/>
    </location>
</feature>
<feature type="compositionally biased region" description="Basic and acidic residues" evidence="3">
    <location>
        <begin position="266"/>
        <end position="278"/>
    </location>
</feature>
<feature type="compositionally biased region" description="Basic and acidic residues" evidence="3">
    <location>
        <begin position="315"/>
        <end position="331"/>
    </location>
</feature>
<feature type="compositionally biased region" description="Polar residues" evidence="3">
    <location>
        <begin position="335"/>
        <end position="347"/>
    </location>
</feature>
<evidence type="ECO:0000250" key="1"/>
<evidence type="ECO:0000255" key="2">
    <source>
        <dbReference type="PROSITE-ProRule" id="PRU00981"/>
    </source>
</evidence>
<evidence type="ECO:0000256" key="3">
    <source>
        <dbReference type="SAM" id="MobiDB-lite"/>
    </source>
</evidence>
<evidence type="ECO:0000305" key="4"/>